<organism>
    <name type="scientific">Drosophila melanogaster</name>
    <name type="common">Fruit fly</name>
    <dbReference type="NCBI Taxonomy" id="7227"/>
    <lineage>
        <taxon>Eukaryota</taxon>
        <taxon>Metazoa</taxon>
        <taxon>Ecdysozoa</taxon>
        <taxon>Arthropoda</taxon>
        <taxon>Hexapoda</taxon>
        <taxon>Insecta</taxon>
        <taxon>Pterygota</taxon>
        <taxon>Neoptera</taxon>
        <taxon>Endopterygota</taxon>
        <taxon>Diptera</taxon>
        <taxon>Brachycera</taxon>
        <taxon>Muscomorpha</taxon>
        <taxon>Ephydroidea</taxon>
        <taxon>Drosophilidae</taxon>
        <taxon>Drosophila</taxon>
        <taxon>Sophophora</taxon>
    </lineage>
</organism>
<evidence type="ECO:0000250" key="1"/>
<evidence type="ECO:0000255" key="2"/>
<evidence type="ECO:0000269" key="3">
    <source>
    </source>
</evidence>
<evidence type="ECO:0000269" key="4">
    <source>
    </source>
</evidence>
<evidence type="ECO:0000269" key="5">
    <source>
    </source>
</evidence>
<evidence type="ECO:0000305" key="6"/>
<name>OR65A_DROME</name>
<feature type="chain" id="PRO_0000174259" description="Odorant receptor 65a">
    <location>
        <begin position="1"/>
        <end position="417"/>
    </location>
</feature>
<feature type="topological domain" description="Cytoplasmic" evidence="2">
    <location>
        <begin position="1"/>
        <end position="62"/>
    </location>
</feature>
<feature type="transmembrane region" description="Helical; Name=1" evidence="2">
    <location>
        <begin position="63"/>
        <end position="83"/>
    </location>
</feature>
<feature type="topological domain" description="Extracellular" evidence="2">
    <location>
        <begin position="84"/>
        <end position="98"/>
    </location>
</feature>
<feature type="transmembrane region" description="Helical; Name=2" evidence="2">
    <location>
        <begin position="99"/>
        <end position="119"/>
    </location>
</feature>
<feature type="topological domain" description="Cytoplasmic" evidence="2">
    <location>
        <begin position="120"/>
        <end position="152"/>
    </location>
</feature>
<feature type="transmembrane region" description="Helical; Name=3" evidence="2">
    <location>
        <begin position="153"/>
        <end position="173"/>
    </location>
</feature>
<feature type="topological domain" description="Extracellular" evidence="2">
    <location>
        <begin position="174"/>
        <end position="206"/>
    </location>
</feature>
<feature type="transmembrane region" description="Helical; Name=4" evidence="2">
    <location>
        <begin position="207"/>
        <end position="227"/>
    </location>
</feature>
<feature type="topological domain" description="Cytoplasmic" evidence="2">
    <location>
        <begin position="228"/>
        <end position="290"/>
    </location>
</feature>
<feature type="transmembrane region" description="Helical; Name=5" evidence="2">
    <location>
        <begin position="291"/>
        <end position="311"/>
    </location>
</feature>
<feature type="topological domain" description="Extracellular" evidence="2">
    <location>
        <begin position="312"/>
        <end position="316"/>
    </location>
</feature>
<feature type="transmembrane region" description="Helical; Name=6" evidence="2">
    <location>
        <begin position="317"/>
        <end position="337"/>
    </location>
</feature>
<feature type="topological domain" description="Cytoplasmic" evidence="2">
    <location>
        <begin position="338"/>
        <end position="393"/>
    </location>
</feature>
<feature type="transmembrane region" description="Helical; Name=7" evidence="2">
    <location>
        <begin position="394"/>
        <end position="414"/>
    </location>
</feature>
<feature type="topological domain" description="Extracellular" evidence="2">
    <location>
        <begin position="415"/>
        <end position="417"/>
    </location>
</feature>
<proteinExistence type="evidence at transcript level"/>
<reference key="1">
    <citation type="journal article" date="2000" name="Science">
        <title>The genome sequence of Drosophila melanogaster.</title>
        <authorList>
            <person name="Adams M.D."/>
            <person name="Celniker S.E."/>
            <person name="Holt R.A."/>
            <person name="Evans C.A."/>
            <person name="Gocayne J.D."/>
            <person name="Amanatides P.G."/>
            <person name="Scherer S.E."/>
            <person name="Li P.W."/>
            <person name="Hoskins R.A."/>
            <person name="Galle R.F."/>
            <person name="George R.A."/>
            <person name="Lewis S.E."/>
            <person name="Richards S."/>
            <person name="Ashburner M."/>
            <person name="Henderson S.N."/>
            <person name="Sutton G.G."/>
            <person name="Wortman J.R."/>
            <person name="Yandell M.D."/>
            <person name="Zhang Q."/>
            <person name="Chen L.X."/>
            <person name="Brandon R.C."/>
            <person name="Rogers Y.-H.C."/>
            <person name="Blazej R.G."/>
            <person name="Champe M."/>
            <person name="Pfeiffer B.D."/>
            <person name="Wan K.H."/>
            <person name="Doyle C."/>
            <person name="Baxter E.G."/>
            <person name="Helt G."/>
            <person name="Nelson C.R."/>
            <person name="Miklos G.L.G."/>
            <person name="Abril J.F."/>
            <person name="Agbayani A."/>
            <person name="An H.-J."/>
            <person name="Andrews-Pfannkoch C."/>
            <person name="Baldwin D."/>
            <person name="Ballew R.M."/>
            <person name="Basu A."/>
            <person name="Baxendale J."/>
            <person name="Bayraktaroglu L."/>
            <person name="Beasley E.M."/>
            <person name="Beeson K.Y."/>
            <person name="Benos P.V."/>
            <person name="Berman B.P."/>
            <person name="Bhandari D."/>
            <person name="Bolshakov S."/>
            <person name="Borkova D."/>
            <person name="Botchan M.R."/>
            <person name="Bouck J."/>
            <person name="Brokstein P."/>
            <person name="Brottier P."/>
            <person name="Burtis K.C."/>
            <person name="Busam D.A."/>
            <person name="Butler H."/>
            <person name="Cadieu E."/>
            <person name="Center A."/>
            <person name="Chandra I."/>
            <person name="Cherry J.M."/>
            <person name="Cawley S."/>
            <person name="Dahlke C."/>
            <person name="Davenport L.B."/>
            <person name="Davies P."/>
            <person name="de Pablos B."/>
            <person name="Delcher A."/>
            <person name="Deng Z."/>
            <person name="Mays A.D."/>
            <person name="Dew I."/>
            <person name="Dietz S.M."/>
            <person name="Dodson K."/>
            <person name="Doup L.E."/>
            <person name="Downes M."/>
            <person name="Dugan-Rocha S."/>
            <person name="Dunkov B.C."/>
            <person name="Dunn P."/>
            <person name="Durbin K.J."/>
            <person name="Evangelista C.C."/>
            <person name="Ferraz C."/>
            <person name="Ferriera S."/>
            <person name="Fleischmann W."/>
            <person name="Fosler C."/>
            <person name="Gabrielian A.E."/>
            <person name="Garg N.S."/>
            <person name="Gelbart W.M."/>
            <person name="Glasser K."/>
            <person name="Glodek A."/>
            <person name="Gong F."/>
            <person name="Gorrell J.H."/>
            <person name="Gu Z."/>
            <person name="Guan P."/>
            <person name="Harris M."/>
            <person name="Harris N.L."/>
            <person name="Harvey D.A."/>
            <person name="Heiman T.J."/>
            <person name="Hernandez J.R."/>
            <person name="Houck J."/>
            <person name="Hostin D."/>
            <person name="Houston K.A."/>
            <person name="Howland T.J."/>
            <person name="Wei M.-H."/>
            <person name="Ibegwam C."/>
            <person name="Jalali M."/>
            <person name="Kalush F."/>
            <person name="Karpen G.H."/>
            <person name="Ke Z."/>
            <person name="Kennison J.A."/>
            <person name="Ketchum K.A."/>
            <person name="Kimmel B.E."/>
            <person name="Kodira C.D."/>
            <person name="Kraft C.L."/>
            <person name="Kravitz S."/>
            <person name="Kulp D."/>
            <person name="Lai Z."/>
            <person name="Lasko P."/>
            <person name="Lei Y."/>
            <person name="Levitsky A.A."/>
            <person name="Li J.H."/>
            <person name="Li Z."/>
            <person name="Liang Y."/>
            <person name="Lin X."/>
            <person name="Liu X."/>
            <person name="Mattei B."/>
            <person name="McIntosh T.C."/>
            <person name="McLeod M.P."/>
            <person name="McPherson D."/>
            <person name="Merkulov G."/>
            <person name="Milshina N.V."/>
            <person name="Mobarry C."/>
            <person name="Morris J."/>
            <person name="Moshrefi A."/>
            <person name="Mount S.M."/>
            <person name="Moy M."/>
            <person name="Murphy B."/>
            <person name="Murphy L."/>
            <person name="Muzny D.M."/>
            <person name="Nelson D.L."/>
            <person name="Nelson D.R."/>
            <person name="Nelson K.A."/>
            <person name="Nixon K."/>
            <person name="Nusskern D.R."/>
            <person name="Pacleb J.M."/>
            <person name="Palazzolo M."/>
            <person name="Pittman G.S."/>
            <person name="Pan S."/>
            <person name="Pollard J."/>
            <person name="Puri V."/>
            <person name="Reese M.G."/>
            <person name="Reinert K."/>
            <person name="Remington K."/>
            <person name="Saunders R.D.C."/>
            <person name="Scheeler F."/>
            <person name="Shen H."/>
            <person name="Shue B.C."/>
            <person name="Siden-Kiamos I."/>
            <person name="Simpson M."/>
            <person name="Skupski M.P."/>
            <person name="Smith T.J."/>
            <person name="Spier E."/>
            <person name="Spradling A.C."/>
            <person name="Stapleton M."/>
            <person name="Strong R."/>
            <person name="Sun E."/>
            <person name="Svirskas R."/>
            <person name="Tector C."/>
            <person name="Turner R."/>
            <person name="Venter E."/>
            <person name="Wang A.H."/>
            <person name="Wang X."/>
            <person name="Wang Z.-Y."/>
            <person name="Wassarman D.A."/>
            <person name="Weinstock G.M."/>
            <person name="Weissenbach J."/>
            <person name="Williams S.M."/>
            <person name="Woodage T."/>
            <person name="Worley K.C."/>
            <person name="Wu D."/>
            <person name="Yang S."/>
            <person name="Yao Q.A."/>
            <person name="Ye J."/>
            <person name="Yeh R.-F."/>
            <person name="Zaveri J.S."/>
            <person name="Zhan M."/>
            <person name="Zhang G."/>
            <person name="Zhao Q."/>
            <person name="Zheng L."/>
            <person name="Zheng X.H."/>
            <person name="Zhong F.N."/>
            <person name="Zhong W."/>
            <person name="Zhou X."/>
            <person name="Zhu S.C."/>
            <person name="Zhu X."/>
            <person name="Smith H.O."/>
            <person name="Gibbs R.A."/>
            <person name="Myers E.W."/>
            <person name="Rubin G.M."/>
            <person name="Venter J.C."/>
        </authorList>
    </citation>
    <scope>NUCLEOTIDE SEQUENCE [LARGE SCALE GENOMIC DNA]</scope>
    <source>
        <strain>Berkeley</strain>
    </source>
</reference>
<reference key="2">
    <citation type="journal article" date="2002" name="Genome Biol.">
        <title>Annotation of the Drosophila melanogaster euchromatic genome: a systematic review.</title>
        <authorList>
            <person name="Misra S."/>
            <person name="Crosby M.A."/>
            <person name="Mungall C.J."/>
            <person name="Matthews B.B."/>
            <person name="Campbell K.S."/>
            <person name="Hradecky P."/>
            <person name="Huang Y."/>
            <person name="Kaminker J.S."/>
            <person name="Millburn G.H."/>
            <person name="Prochnik S.E."/>
            <person name="Smith C.D."/>
            <person name="Tupy J.L."/>
            <person name="Whitfield E.J."/>
            <person name="Bayraktaroglu L."/>
            <person name="Berman B.P."/>
            <person name="Bettencourt B.R."/>
            <person name="Celniker S.E."/>
            <person name="de Grey A.D.N.J."/>
            <person name="Drysdale R.A."/>
            <person name="Harris N.L."/>
            <person name="Richter J."/>
            <person name="Russo S."/>
            <person name="Schroeder A.J."/>
            <person name="Shu S.Q."/>
            <person name="Stapleton M."/>
            <person name="Yamada C."/>
            <person name="Ashburner M."/>
            <person name="Gelbart W.M."/>
            <person name="Rubin G.M."/>
            <person name="Lewis S.E."/>
        </authorList>
    </citation>
    <scope>GENOME REANNOTATION</scope>
    <source>
        <strain>Berkeley</strain>
    </source>
</reference>
<reference key="3">
    <citation type="journal article" date="2000" name="Cell">
        <title>An olfactory sensory map in the fly brain.</title>
        <authorList>
            <person name="Vosshall L.B."/>
            <person name="Wong A.M."/>
            <person name="Axel R."/>
        </authorList>
    </citation>
    <scope>TISSUE SPECIFICITY</scope>
</reference>
<reference key="4">
    <citation type="journal article" date="2006" name="Cell">
        <title>Coding of odors by a receptor repertoire.</title>
        <authorList>
            <person name="Hallem E.A."/>
            <person name="Carlson J.R."/>
        </authorList>
    </citation>
    <scope>FUNCTION</scope>
</reference>
<reference key="5">
    <citation type="journal article" date="2011" name="Nat. Neurosci.">
        <title>Social regulation of aggression by pheromonal activation of Or65a olfactory neurons in Drosophila.</title>
        <authorList>
            <person name="Liu W."/>
            <person name="Liang X."/>
            <person name="Gong J."/>
            <person name="Yang Z."/>
            <person name="Zhang Y.H."/>
            <person name="Zhang J.X."/>
            <person name="Rao Y."/>
        </authorList>
    </citation>
    <scope>FUNCTION</scope>
</reference>
<protein>
    <recommendedName>
        <fullName>Odorant receptor 65a</fullName>
    </recommendedName>
</protein>
<comment type="function">
    <text evidence="4 5">Odorant receptor which mediates acceptance or avoidance behavior, depending on its substrates. The odorant receptor repertoire encodes a large collection of odor stimuli that vary widely in identity, intensity, and duration. May form a complex with Orco to form odorant-sensing units, providing sensitive and prolonged odorant signaling and calcium permeability. Involved in olfactory communication for modulating aggression through the sensing of the male-specific pheromone 11-cis-vaccenyl acetate (cVA). Although acute exposure to cVA elicites aggression through Or67d olfactory receptor neurons (ORNs), chronic cVA exposure reduces aggression through Or65a ORNs. Moreover, cVA leads to generalized learning with mated females. It is a major component of the male cuticular hydrocarbon profile, but it is not found on virgin females. During copulation, cVA is transferred to the female in ejaculate along with sperm and peptides that decrease her sexual receptivity.</text>
</comment>
<comment type="subunit">
    <text evidence="1">Interacts with Orco. Complexes exist early in the endomembrane system in olfactory sensory neurons (OSNs), coupling these complexes to the conserved ciliary trafficking pathway (By similarity).</text>
</comment>
<comment type="subcellular location">
    <subcellularLocation>
        <location evidence="1">Cell membrane</location>
        <topology evidence="1">Multi-pass membrane protein</topology>
    </subcellularLocation>
</comment>
<comment type="tissue specificity">
    <text evidence="3">Expressed in olfactory sensory neurons in the antenna.</text>
</comment>
<comment type="miscellaneous">
    <text>The atypical heteromeric and topological design of the odorant receptors appears to be an insect-specific solution for odor recognition, making the OR/Orco complex an attractive target for the development of highly selective insect repellents to disrupt olfactory-mediated host-seeking behaviors of insect disease vectors. Odor-evoked OR currents are independent of known G-protein-coupled second messenger pathways.</text>
</comment>
<comment type="similarity">
    <text evidence="6">Belongs to the insect chemoreceptor superfamily. Heteromeric odorant receptor channel (TC 1.A.69) family. Or49a subfamily.</text>
</comment>
<keyword id="KW-1003">Cell membrane</keyword>
<keyword id="KW-0472">Membrane</keyword>
<keyword id="KW-0552">Olfaction</keyword>
<keyword id="KW-0675">Receptor</keyword>
<keyword id="KW-1185">Reference proteome</keyword>
<keyword id="KW-0716">Sensory transduction</keyword>
<keyword id="KW-0807">Transducer</keyword>
<keyword id="KW-0812">Transmembrane</keyword>
<keyword id="KW-1133">Transmembrane helix</keyword>
<gene>
    <name type="primary">Or65a</name>
    <name type="ORF">CG32401</name>
</gene>
<dbReference type="EMBL" id="AE014296">
    <property type="protein sequence ID" value="AAN12091.1"/>
    <property type="molecule type" value="Genomic_DNA"/>
</dbReference>
<dbReference type="RefSeq" id="NP_729161.1">
    <property type="nucleotide sequence ID" value="NM_168163.1"/>
</dbReference>
<dbReference type="SMR" id="P82982"/>
<dbReference type="FunCoup" id="P82982">
    <property type="interactions" value="17"/>
</dbReference>
<dbReference type="STRING" id="7227.FBpp0076712"/>
<dbReference type="PaxDb" id="7227-FBpp0076712"/>
<dbReference type="EnsemblMetazoa" id="FBtr0077004">
    <property type="protein sequence ID" value="FBpp0076712"/>
    <property type="gene ID" value="FBgn0041625"/>
</dbReference>
<dbReference type="GeneID" id="318011"/>
<dbReference type="KEGG" id="dme:Dmel_CG32401"/>
<dbReference type="AGR" id="FB:FBgn0041625"/>
<dbReference type="CTD" id="318011"/>
<dbReference type="FlyBase" id="FBgn0041625">
    <property type="gene designation" value="Or65a"/>
</dbReference>
<dbReference type="VEuPathDB" id="VectorBase:FBgn0041625"/>
<dbReference type="eggNOG" id="ENOG502SXXU">
    <property type="taxonomic scope" value="Eukaryota"/>
</dbReference>
<dbReference type="GeneTree" id="ENSGT00940000166470"/>
<dbReference type="HOGENOM" id="CLU_055891_1_0_1"/>
<dbReference type="InParanoid" id="P82982"/>
<dbReference type="OMA" id="EDIYHWS"/>
<dbReference type="OrthoDB" id="6604226at2759"/>
<dbReference type="PhylomeDB" id="P82982"/>
<dbReference type="BioGRID-ORCS" id="318011">
    <property type="hits" value="0 hits in 1 CRISPR screen"/>
</dbReference>
<dbReference type="ChiTaRS" id="Or65a">
    <property type="organism name" value="fly"/>
</dbReference>
<dbReference type="GenomeRNAi" id="318011"/>
<dbReference type="PRO" id="PR:P82982"/>
<dbReference type="Proteomes" id="UP000000803">
    <property type="component" value="Chromosome 3L"/>
</dbReference>
<dbReference type="Bgee" id="FBgn0041625">
    <property type="expression patterns" value="Expressed in adult olfactory receptor neuron Or65 (Drosophila) in antenna and 1 other cell type or tissue"/>
</dbReference>
<dbReference type="ExpressionAtlas" id="P82982">
    <property type="expression patterns" value="baseline and differential"/>
</dbReference>
<dbReference type="GO" id="GO:0032590">
    <property type="term" value="C:dendrite membrane"/>
    <property type="evidence" value="ECO:0000250"/>
    <property type="project" value="FlyBase"/>
</dbReference>
<dbReference type="GO" id="GO:0005886">
    <property type="term" value="C:plasma membrane"/>
    <property type="evidence" value="ECO:0000318"/>
    <property type="project" value="GO_Central"/>
</dbReference>
<dbReference type="GO" id="GO:0170020">
    <property type="term" value="F:ionotropic olfactory receptor activity"/>
    <property type="evidence" value="ECO:0007005"/>
    <property type="project" value="FlyBase"/>
</dbReference>
<dbReference type="GO" id="GO:0005549">
    <property type="term" value="F:odorant binding"/>
    <property type="evidence" value="ECO:0000250"/>
    <property type="project" value="FlyBase"/>
</dbReference>
<dbReference type="GO" id="GO:0004984">
    <property type="term" value="F:olfactory receptor activity"/>
    <property type="evidence" value="ECO:0000318"/>
    <property type="project" value="GO_Central"/>
</dbReference>
<dbReference type="GO" id="GO:0050911">
    <property type="term" value="P:detection of chemical stimulus involved in sensory perception of smell"/>
    <property type="evidence" value="ECO:0007005"/>
    <property type="project" value="FlyBase"/>
</dbReference>
<dbReference type="GO" id="GO:0007165">
    <property type="term" value="P:signal transduction"/>
    <property type="evidence" value="ECO:0007669"/>
    <property type="project" value="UniProtKB-KW"/>
</dbReference>
<dbReference type="InterPro" id="IPR004117">
    <property type="entry name" value="7tm6_olfct_rcpt"/>
</dbReference>
<dbReference type="PANTHER" id="PTHR21137">
    <property type="entry name" value="ODORANT RECEPTOR"/>
    <property type="match status" value="1"/>
</dbReference>
<dbReference type="PANTHER" id="PTHR21137:SF35">
    <property type="entry name" value="ODORANT RECEPTOR 19A-RELATED"/>
    <property type="match status" value="1"/>
</dbReference>
<dbReference type="Pfam" id="PF02949">
    <property type="entry name" value="7tm_6"/>
    <property type="match status" value="1"/>
</dbReference>
<sequence>MTELRSERKNGNWDRLFGPFFESWAVFKAPQAKSRHIIAYWTRDQLKALGFYMNSEQRRLPRIVAWQYFVSIQLATALASLFYGISESIGDIVNLGRDLVFIITIIFICFRLVFFAQYAGELDVIIDALEDIYHWSIKGPATKEVQETKRLHFLLFMALIITWFSFLILFMLIKISTPFWIESQTLPFHVSWPFQLHDPSKHPIAYIIIFVSQSTTMLYFLIWLGVVENMGVSLFFELTSALRVLCIELRNLQELCLGDEDMLYRELCRMTKFHQQIILLTDRCNHIFNGAFIMQMLINFLLVSLSLFEVLAAKKNPQVAVEYMIIMLMTLGHLSFWSKFGDMFSKESEQVALAVYEAYDPNVGSKSIHRQFCFFIQRAQKPLIMKASPFPPFNLENYMFILKQCYSILTILANTLE</sequence>
<accession>P82982</accession>